<evidence type="ECO:0000255" key="1">
    <source>
        <dbReference type="HAMAP-Rule" id="MF_01351"/>
    </source>
</evidence>
<protein>
    <recommendedName>
        <fullName evidence="1">NADH-quinone oxidoreductase subunit I</fullName>
        <ecNumber evidence="1">7.1.1.-</ecNumber>
    </recommendedName>
    <alternativeName>
        <fullName evidence="1">NADH dehydrogenase I subunit I</fullName>
    </alternativeName>
    <alternativeName>
        <fullName evidence="1">NDH-1 subunit I</fullName>
    </alternativeName>
</protein>
<name>NUOI_ANAMM</name>
<feature type="chain" id="PRO_0000250873" description="NADH-quinone oxidoreductase subunit I">
    <location>
        <begin position="1"/>
        <end position="160"/>
    </location>
</feature>
<feature type="domain" description="4Fe-4S ferredoxin-type 1" evidence="1">
    <location>
        <begin position="51"/>
        <end position="81"/>
    </location>
</feature>
<feature type="domain" description="4Fe-4S ferredoxin-type 2" evidence="1">
    <location>
        <begin position="91"/>
        <end position="120"/>
    </location>
</feature>
<feature type="binding site" evidence="1">
    <location>
        <position position="61"/>
    </location>
    <ligand>
        <name>[4Fe-4S] cluster</name>
        <dbReference type="ChEBI" id="CHEBI:49883"/>
        <label>1</label>
    </ligand>
</feature>
<feature type="binding site" evidence="1">
    <location>
        <position position="64"/>
    </location>
    <ligand>
        <name>[4Fe-4S] cluster</name>
        <dbReference type="ChEBI" id="CHEBI:49883"/>
        <label>1</label>
    </ligand>
</feature>
<feature type="binding site" evidence="1">
    <location>
        <position position="67"/>
    </location>
    <ligand>
        <name>[4Fe-4S] cluster</name>
        <dbReference type="ChEBI" id="CHEBI:49883"/>
        <label>1</label>
    </ligand>
</feature>
<feature type="binding site" evidence="1">
    <location>
        <position position="71"/>
    </location>
    <ligand>
        <name>[4Fe-4S] cluster</name>
        <dbReference type="ChEBI" id="CHEBI:49883"/>
        <label>2</label>
    </ligand>
</feature>
<feature type="binding site" evidence="1">
    <location>
        <position position="100"/>
    </location>
    <ligand>
        <name>[4Fe-4S] cluster</name>
        <dbReference type="ChEBI" id="CHEBI:49883"/>
        <label>2</label>
    </ligand>
</feature>
<feature type="binding site" evidence="1">
    <location>
        <position position="103"/>
    </location>
    <ligand>
        <name>[4Fe-4S] cluster</name>
        <dbReference type="ChEBI" id="CHEBI:49883"/>
        <label>2</label>
    </ligand>
</feature>
<feature type="binding site" evidence="1">
    <location>
        <position position="106"/>
    </location>
    <ligand>
        <name>[4Fe-4S] cluster</name>
        <dbReference type="ChEBI" id="CHEBI:49883"/>
        <label>2</label>
    </ligand>
</feature>
<feature type="binding site" evidence="1">
    <location>
        <position position="110"/>
    </location>
    <ligand>
        <name>[4Fe-4S] cluster</name>
        <dbReference type="ChEBI" id="CHEBI:49883"/>
        <label>1</label>
    </ligand>
</feature>
<gene>
    <name evidence="1" type="primary">nuoI</name>
    <name type="ordered locus">AM707</name>
</gene>
<dbReference type="EC" id="7.1.1.-" evidence="1"/>
<dbReference type="EMBL" id="CP000030">
    <property type="protein sequence ID" value="AAV86673.1"/>
    <property type="molecule type" value="Genomic_DNA"/>
</dbReference>
<dbReference type="RefSeq" id="WP_011114403.1">
    <property type="nucleotide sequence ID" value="NZ_AFMU01000058.1"/>
</dbReference>
<dbReference type="SMR" id="Q5PAK7"/>
<dbReference type="GeneID" id="7398143"/>
<dbReference type="KEGG" id="ama:AM707"/>
<dbReference type="HOGENOM" id="CLU_067218_5_1_5"/>
<dbReference type="GO" id="GO:0005886">
    <property type="term" value="C:plasma membrane"/>
    <property type="evidence" value="ECO:0007669"/>
    <property type="project" value="UniProtKB-SubCell"/>
</dbReference>
<dbReference type="GO" id="GO:0051539">
    <property type="term" value="F:4 iron, 4 sulfur cluster binding"/>
    <property type="evidence" value="ECO:0007669"/>
    <property type="project" value="UniProtKB-KW"/>
</dbReference>
<dbReference type="GO" id="GO:0005506">
    <property type="term" value="F:iron ion binding"/>
    <property type="evidence" value="ECO:0007669"/>
    <property type="project" value="UniProtKB-UniRule"/>
</dbReference>
<dbReference type="GO" id="GO:0050136">
    <property type="term" value="F:NADH:ubiquinone reductase (non-electrogenic) activity"/>
    <property type="evidence" value="ECO:0007669"/>
    <property type="project" value="UniProtKB-UniRule"/>
</dbReference>
<dbReference type="GO" id="GO:0048038">
    <property type="term" value="F:quinone binding"/>
    <property type="evidence" value="ECO:0007669"/>
    <property type="project" value="UniProtKB-KW"/>
</dbReference>
<dbReference type="GO" id="GO:0009060">
    <property type="term" value="P:aerobic respiration"/>
    <property type="evidence" value="ECO:0007669"/>
    <property type="project" value="TreeGrafter"/>
</dbReference>
<dbReference type="FunFam" id="3.30.70.3270:FF:000001">
    <property type="entry name" value="NADH-quinone oxidoreductase subunit I 1"/>
    <property type="match status" value="1"/>
</dbReference>
<dbReference type="Gene3D" id="3.30.70.3270">
    <property type="match status" value="1"/>
</dbReference>
<dbReference type="HAMAP" id="MF_01351">
    <property type="entry name" value="NDH1_NuoI"/>
    <property type="match status" value="1"/>
</dbReference>
<dbReference type="InterPro" id="IPR017896">
    <property type="entry name" value="4Fe4S_Fe-S-bd"/>
</dbReference>
<dbReference type="InterPro" id="IPR017900">
    <property type="entry name" value="4Fe4S_Fe_S_CS"/>
</dbReference>
<dbReference type="InterPro" id="IPR010226">
    <property type="entry name" value="NADH_quinone_OxRdtase_chainI"/>
</dbReference>
<dbReference type="NCBIfam" id="TIGR01971">
    <property type="entry name" value="NuoI"/>
    <property type="match status" value="1"/>
</dbReference>
<dbReference type="NCBIfam" id="NF004538">
    <property type="entry name" value="PRK05888.1-4"/>
    <property type="match status" value="1"/>
</dbReference>
<dbReference type="NCBIfam" id="NF004539">
    <property type="entry name" value="PRK05888.1-5"/>
    <property type="match status" value="1"/>
</dbReference>
<dbReference type="PANTHER" id="PTHR10849:SF20">
    <property type="entry name" value="NADH DEHYDROGENASE [UBIQUINONE] IRON-SULFUR PROTEIN 8, MITOCHONDRIAL"/>
    <property type="match status" value="1"/>
</dbReference>
<dbReference type="PANTHER" id="PTHR10849">
    <property type="entry name" value="NADH DEHYDROGENASE UBIQUINONE IRON-SULFUR PROTEIN 8, MITOCHONDRIAL"/>
    <property type="match status" value="1"/>
</dbReference>
<dbReference type="Pfam" id="PF12838">
    <property type="entry name" value="Fer4_7"/>
    <property type="match status" value="1"/>
</dbReference>
<dbReference type="SUPFAM" id="SSF54862">
    <property type="entry name" value="4Fe-4S ferredoxins"/>
    <property type="match status" value="1"/>
</dbReference>
<dbReference type="PROSITE" id="PS00198">
    <property type="entry name" value="4FE4S_FER_1"/>
    <property type="match status" value="2"/>
</dbReference>
<dbReference type="PROSITE" id="PS51379">
    <property type="entry name" value="4FE4S_FER_2"/>
    <property type="match status" value="2"/>
</dbReference>
<reference key="1">
    <citation type="journal article" date="2005" name="Proc. Natl. Acad. Sci. U.S.A.">
        <title>Complete genome sequencing of Anaplasma marginale reveals that the surface is skewed to two superfamilies of outer membrane proteins.</title>
        <authorList>
            <person name="Brayton K.A."/>
            <person name="Kappmeyer L.S."/>
            <person name="Herndon D.R."/>
            <person name="Dark M.J."/>
            <person name="Tibbals D.L."/>
            <person name="Palmer G.H."/>
            <person name="McGuire T.C."/>
            <person name="Knowles D.P. Jr."/>
        </authorList>
    </citation>
    <scope>NUCLEOTIDE SEQUENCE [LARGE SCALE GENOMIC DNA]</scope>
    <source>
        <strain>St. Maries</strain>
    </source>
</reference>
<accession>Q5PAK7</accession>
<keyword id="KW-0004">4Fe-4S</keyword>
<keyword id="KW-0997">Cell inner membrane</keyword>
<keyword id="KW-1003">Cell membrane</keyword>
<keyword id="KW-0408">Iron</keyword>
<keyword id="KW-0411">Iron-sulfur</keyword>
<keyword id="KW-0472">Membrane</keyword>
<keyword id="KW-0479">Metal-binding</keyword>
<keyword id="KW-0520">NAD</keyword>
<keyword id="KW-0874">Quinone</keyword>
<keyword id="KW-0677">Repeat</keyword>
<keyword id="KW-1278">Translocase</keyword>
<keyword id="KW-0830">Ubiquinone</keyword>
<organism>
    <name type="scientific">Anaplasma marginale (strain St. Maries)</name>
    <dbReference type="NCBI Taxonomy" id="234826"/>
    <lineage>
        <taxon>Bacteria</taxon>
        <taxon>Pseudomonadati</taxon>
        <taxon>Pseudomonadota</taxon>
        <taxon>Alphaproteobacteria</taxon>
        <taxon>Rickettsiales</taxon>
        <taxon>Anaplasmataceae</taxon>
        <taxon>Anaplasma</taxon>
    </lineage>
</organism>
<proteinExistence type="inferred from homology"/>
<comment type="function">
    <text evidence="1">NDH-1 shuttles electrons from NADH, via FMN and iron-sulfur (Fe-S) centers, to quinones in the respiratory chain. The immediate electron acceptor for the enzyme in this species is believed to be ubiquinone. Couples the redox reaction to proton translocation (for every two electrons transferred, four hydrogen ions are translocated across the cytoplasmic membrane), and thus conserves the redox energy in a proton gradient.</text>
</comment>
<comment type="catalytic activity">
    <reaction evidence="1">
        <text>a quinone + NADH + 5 H(+)(in) = a quinol + NAD(+) + 4 H(+)(out)</text>
        <dbReference type="Rhea" id="RHEA:57888"/>
        <dbReference type="ChEBI" id="CHEBI:15378"/>
        <dbReference type="ChEBI" id="CHEBI:24646"/>
        <dbReference type="ChEBI" id="CHEBI:57540"/>
        <dbReference type="ChEBI" id="CHEBI:57945"/>
        <dbReference type="ChEBI" id="CHEBI:132124"/>
    </reaction>
</comment>
<comment type="cofactor">
    <cofactor evidence="1">
        <name>[4Fe-4S] cluster</name>
        <dbReference type="ChEBI" id="CHEBI:49883"/>
    </cofactor>
    <text evidence="1">Binds 2 [4Fe-4S] clusters per subunit.</text>
</comment>
<comment type="subunit">
    <text evidence="1">NDH-1 is composed of 14 different subunits. Subunits NuoA, H, J, K, L, M, N constitute the membrane sector of the complex.</text>
</comment>
<comment type="subcellular location">
    <subcellularLocation>
        <location evidence="1">Cell inner membrane</location>
        <topology evidence="1">Peripheral membrane protein</topology>
    </subcellularLocation>
</comment>
<comment type="similarity">
    <text evidence="1">Belongs to the complex I 23 kDa subunit family.</text>
</comment>
<sequence length="160" mass="18443">MRRVMVLFGVVIAGVKGFMLTLVSMFRPKVTLRYPSEKGPLSTRFRGEHALRRYDDGEERCIACKLCEAICPAQAITIEAAERGDGSRRTVRYDIDMTKCIYCGFCQEACPVDAIVEGPNFEYATETREELMYNKEKLLCNGDVWEEALDFRIRKNRPYY</sequence>